<name>RS15_OLEA2</name>
<sequence length="89" mass="10429">MVMTPEKKMSIIEEYGQHEGDTGSPEVQVALLTARIEYLTEHFKSHKQDYHSRTGLLKLVGQRRNMLKYLAKKDVQRYRALIQKLGLRK</sequence>
<protein>
    <recommendedName>
        <fullName evidence="1">Small ribosomal subunit protein uS15</fullName>
    </recommendedName>
    <alternativeName>
        <fullName evidence="2">30S ribosomal protein S15</fullName>
    </alternativeName>
</protein>
<keyword id="KW-1185">Reference proteome</keyword>
<keyword id="KW-0687">Ribonucleoprotein</keyword>
<keyword id="KW-0689">Ribosomal protein</keyword>
<keyword id="KW-0694">RNA-binding</keyword>
<keyword id="KW-0699">rRNA-binding</keyword>
<comment type="function">
    <text evidence="1">One of the primary rRNA binding proteins, it binds directly to 16S rRNA where it helps nucleate assembly of the platform of the 30S subunit by binding and bridging several RNA helices of the 16S rRNA.</text>
</comment>
<comment type="function">
    <text evidence="1">Forms an intersubunit bridge (bridge B4) with the 23S rRNA of the 50S subunit in the ribosome.</text>
</comment>
<comment type="subunit">
    <text evidence="1">Part of the 30S ribosomal subunit. Forms a bridge to the 50S subunit in the 70S ribosome, contacting the 23S rRNA.</text>
</comment>
<comment type="similarity">
    <text evidence="1">Belongs to the universal ribosomal protein uS15 family.</text>
</comment>
<dbReference type="EMBL" id="CP000112">
    <property type="protein sequence ID" value="ABB39960.1"/>
    <property type="molecule type" value="Genomic_DNA"/>
</dbReference>
<dbReference type="RefSeq" id="WP_011368915.1">
    <property type="nucleotide sequence ID" value="NC_007519.1"/>
</dbReference>
<dbReference type="SMR" id="Q30WI6"/>
<dbReference type="STRING" id="207559.Dde_3166"/>
<dbReference type="KEGG" id="dde:Dde_3166"/>
<dbReference type="eggNOG" id="COG0184">
    <property type="taxonomic scope" value="Bacteria"/>
</dbReference>
<dbReference type="HOGENOM" id="CLU_148518_0_0_7"/>
<dbReference type="Proteomes" id="UP000002710">
    <property type="component" value="Chromosome"/>
</dbReference>
<dbReference type="GO" id="GO:0022627">
    <property type="term" value="C:cytosolic small ribosomal subunit"/>
    <property type="evidence" value="ECO:0007669"/>
    <property type="project" value="TreeGrafter"/>
</dbReference>
<dbReference type="GO" id="GO:0019843">
    <property type="term" value="F:rRNA binding"/>
    <property type="evidence" value="ECO:0007669"/>
    <property type="project" value="UniProtKB-UniRule"/>
</dbReference>
<dbReference type="GO" id="GO:0003735">
    <property type="term" value="F:structural constituent of ribosome"/>
    <property type="evidence" value="ECO:0007669"/>
    <property type="project" value="InterPro"/>
</dbReference>
<dbReference type="GO" id="GO:0006412">
    <property type="term" value="P:translation"/>
    <property type="evidence" value="ECO:0007669"/>
    <property type="project" value="UniProtKB-UniRule"/>
</dbReference>
<dbReference type="CDD" id="cd00353">
    <property type="entry name" value="Ribosomal_S15p_S13e"/>
    <property type="match status" value="1"/>
</dbReference>
<dbReference type="FunFam" id="1.10.287.10:FF:000002">
    <property type="entry name" value="30S ribosomal protein S15"/>
    <property type="match status" value="1"/>
</dbReference>
<dbReference type="Gene3D" id="6.10.250.3130">
    <property type="match status" value="1"/>
</dbReference>
<dbReference type="Gene3D" id="1.10.287.10">
    <property type="entry name" value="S15/NS1, RNA-binding"/>
    <property type="match status" value="1"/>
</dbReference>
<dbReference type="HAMAP" id="MF_01343_B">
    <property type="entry name" value="Ribosomal_uS15_B"/>
    <property type="match status" value="1"/>
</dbReference>
<dbReference type="InterPro" id="IPR000589">
    <property type="entry name" value="Ribosomal_uS15"/>
</dbReference>
<dbReference type="InterPro" id="IPR005290">
    <property type="entry name" value="Ribosomal_uS15_bac-type"/>
</dbReference>
<dbReference type="InterPro" id="IPR009068">
    <property type="entry name" value="uS15_NS1_RNA-bd_sf"/>
</dbReference>
<dbReference type="NCBIfam" id="TIGR00952">
    <property type="entry name" value="S15_bact"/>
    <property type="match status" value="1"/>
</dbReference>
<dbReference type="PANTHER" id="PTHR23321">
    <property type="entry name" value="RIBOSOMAL PROTEIN S15, BACTERIAL AND ORGANELLAR"/>
    <property type="match status" value="1"/>
</dbReference>
<dbReference type="PANTHER" id="PTHR23321:SF26">
    <property type="entry name" value="SMALL RIBOSOMAL SUBUNIT PROTEIN US15M"/>
    <property type="match status" value="1"/>
</dbReference>
<dbReference type="Pfam" id="PF00312">
    <property type="entry name" value="Ribosomal_S15"/>
    <property type="match status" value="1"/>
</dbReference>
<dbReference type="SMART" id="SM01387">
    <property type="entry name" value="Ribosomal_S15"/>
    <property type="match status" value="1"/>
</dbReference>
<dbReference type="SUPFAM" id="SSF47060">
    <property type="entry name" value="S15/NS1 RNA-binding domain"/>
    <property type="match status" value="1"/>
</dbReference>
<dbReference type="PROSITE" id="PS00362">
    <property type="entry name" value="RIBOSOMAL_S15"/>
    <property type="match status" value="1"/>
</dbReference>
<evidence type="ECO:0000255" key="1">
    <source>
        <dbReference type="HAMAP-Rule" id="MF_01343"/>
    </source>
</evidence>
<evidence type="ECO:0000305" key="2"/>
<accession>Q30WI6</accession>
<reference key="1">
    <citation type="journal article" date="2011" name="J. Bacteriol.">
        <title>Complete genome sequence and updated annotation of Desulfovibrio alaskensis G20.</title>
        <authorList>
            <person name="Hauser L.J."/>
            <person name="Land M.L."/>
            <person name="Brown S.D."/>
            <person name="Larimer F."/>
            <person name="Keller K.L."/>
            <person name="Rapp-Giles B.J."/>
            <person name="Price M.N."/>
            <person name="Lin M."/>
            <person name="Bruce D.C."/>
            <person name="Detter J.C."/>
            <person name="Tapia R."/>
            <person name="Han C.S."/>
            <person name="Goodwin L.A."/>
            <person name="Cheng J.F."/>
            <person name="Pitluck S."/>
            <person name="Copeland A."/>
            <person name="Lucas S."/>
            <person name="Nolan M."/>
            <person name="Lapidus A.L."/>
            <person name="Palumbo A.V."/>
            <person name="Wall J.D."/>
        </authorList>
    </citation>
    <scope>NUCLEOTIDE SEQUENCE [LARGE SCALE GENOMIC DNA]</scope>
    <source>
        <strain>ATCC BAA-1058 / DSM 17464 / G20</strain>
    </source>
</reference>
<gene>
    <name evidence="1" type="primary">rpsO</name>
    <name type="ordered locus">Dde_3166</name>
</gene>
<organism>
    <name type="scientific">Oleidesulfovibrio alaskensis (strain ATCC BAA-1058 / DSM 17464 / G20)</name>
    <name type="common">Desulfovibrio alaskensis</name>
    <dbReference type="NCBI Taxonomy" id="207559"/>
    <lineage>
        <taxon>Bacteria</taxon>
        <taxon>Pseudomonadati</taxon>
        <taxon>Thermodesulfobacteriota</taxon>
        <taxon>Desulfovibrionia</taxon>
        <taxon>Desulfovibrionales</taxon>
        <taxon>Desulfovibrionaceae</taxon>
        <taxon>Oleidesulfovibrio</taxon>
    </lineage>
</organism>
<proteinExistence type="inferred from homology"/>
<feature type="chain" id="PRO_0000255491" description="Small ribosomal subunit protein uS15">
    <location>
        <begin position="1"/>
        <end position="89"/>
    </location>
</feature>